<comment type="function">
    <text evidence="5">Involved in the negative regulation of transcription.</text>
</comment>
<comment type="subunit">
    <text evidence="4 5">Can form homodimers (PubMed:32891193). May be a component of a BHC histone deacetylase complex that contains HDAC1, HDAC2, HMG20B/BRAF35, KDM1A, RCOR1/CoREST, PHF21A/BHC80, ZMYM2, ZNF217, ZMYM3, GSE1 and GTF2I. Interacts with FOXP1 and FOXP2 (PubMed:32891193).</text>
</comment>
<comment type="interaction">
    <interactant intactId="EBI-2797576">
        <id>Q9UBW7</id>
    </interactant>
    <interactant intactId="EBI-2548508">
        <id>Q96IK5</id>
        <label>GMCL1</label>
    </interactant>
    <organismsDiffer>false</organismsDiffer>
    <experiments>3</experiments>
</comment>
<comment type="interaction">
    <interactant intactId="EBI-2797576">
        <id>Q9UBW7</id>
    </interactant>
    <interactant intactId="EBI-372530">
        <id>Q9UHL9</id>
        <label>GTF2IRD1</label>
    </interactant>
    <organismsDiffer>false</organismsDiffer>
    <experiments>5</experiments>
</comment>
<comment type="interaction">
    <interactant intactId="EBI-2797576">
        <id>Q9UBW7</id>
    </interactant>
    <interactant intactId="EBI-747204">
        <id>Q9UKT9</id>
        <label>IKZF3</label>
    </interactant>
    <organismsDiffer>false</organismsDiffer>
    <experiments>3</experiments>
</comment>
<comment type="interaction">
    <interactant intactId="EBI-2797576">
        <id>Q9UBW7</id>
    </interactant>
    <interactant intactId="EBI-712261">
        <id>P22234</id>
        <label>PAICS</label>
    </interactant>
    <organismsDiffer>false</organismsDiffer>
    <experiments>3</experiments>
</comment>
<comment type="subcellular location">
    <subcellularLocation>
        <location evidence="5">Nucleus</location>
    </subcellularLocation>
</comment>
<comment type="alternative products">
    <event type="alternative splicing"/>
    <isoform>
        <id>Q9UBW7-1</id>
        <name>1</name>
        <sequence type="displayed"/>
    </isoform>
    <isoform>
        <id>Q9UBW7-2</id>
        <name>2</name>
        <sequence type="described" ref="VSP_039065 VSP_039066 VSP_039067"/>
    </isoform>
</comment>
<comment type="disease" evidence="5">
    <disease id="DI-06224">
        <name>Neurodevelopmental-craniofacial syndrome with variable renal and cardiac abnormalities</name>
        <acronym>NECRC</acronym>
        <description>An autosomal dominant disorder characterized by dysmorphic craniofacial features, mild developmental delay, mildly impaired intellectual development or learning difficulties, speech delay, and behavioral abnormalities. About half of patients have congenital anomalies of the kidney and urinary tract and/or congenital cardiac defects, including septal defects.</description>
        <dbReference type="MIM" id="619522"/>
    </disease>
    <text>The disease is caused by variants affecting the gene represented in this entry.</text>
</comment>
<comment type="disease">
    <text evidence="6">A chromosomal aberration involving ZMYM2 may be a cause of stem cell leukemia lymphoma syndrome (SCLL). Translocation t(8;13)(p11;q12) with FGFR1. SCLL usually presents as lymphoblastic lymphoma in association with a myeloproliferative disorder, often accompanied by pronounced peripheral eosinophilia and/or prominent eosinophilic infiltrates in the affected bone marrow.</text>
</comment>
<comment type="sequence caution" evidence="8">
    <conflict type="frameshift">
        <sequence resource="EMBL-CDS" id="AAB88464"/>
    </conflict>
</comment>
<comment type="sequence caution" evidence="8">
    <conflict type="frameshift">
        <sequence resource="EMBL-CDS" id="AAC23591"/>
    </conflict>
</comment>
<comment type="sequence caution" evidence="8">
    <conflict type="frameshift">
        <sequence resource="EMBL-CDS" id="CAA73875"/>
    </conflict>
</comment>
<comment type="online information" name="Atlas of Genetics and Cytogenetics in Oncology and Haematology">
    <link uri="https://atlasgeneticsoncology.org/gene/114/ZNF198"/>
</comment>
<keyword id="KW-0025">Alternative splicing</keyword>
<keyword id="KW-0160">Chromosomal rearrangement</keyword>
<keyword id="KW-0225">Disease variant</keyword>
<keyword id="KW-0991">Intellectual disability</keyword>
<keyword id="KW-1017">Isopeptide bond</keyword>
<keyword id="KW-0479">Metal-binding</keyword>
<keyword id="KW-0539">Nucleus</keyword>
<keyword id="KW-0597">Phosphoprotein</keyword>
<keyword id="KW-1267">Proteomics identification</keyword>
<keyword id="KW-1185">Reference proteome</keyword>
<keyword id="KW-0677">Repeat</keyword>
<keyword id="KW-0804">Transcription</keyword>
<keyword id="KW-0805">Transcription regulation</keyword>
<keyword id="KW-0832">Ubl conjugation</keyword>
<keyword id="KW-0862">Zinc</keyword>
<keyword id="KW-0863">Zinc-finger</keyword>
<organism>
    <name type="scientific">Homo sapiens</name>
    <name type="common">Human</name>
    <dbReference type="NCBI Taxonomy" id="9606"/>
    <lineage>
        <taxon>Eukaryota</taxon>
        <taxon>Metazoa</taxon>
        <taxon>Chordata</taxon>
        <taxon>Craniata</taxon>
        <taxon>Vertebrata</taxon>
        <taxon>Euteleostomi</taxon>
        <taxon>Mammalia</taxon>
        <taxon>Eutheria</taxon>
        <taxon>Euarchontoglires</taxon>
        <taxon>Primates</taxon>
        <taxon>Haplorrhini</taxon>
        <taxon>Catarrhini</taxon>
        <taxon>Hominidae</taxon>
        <taxon>Homo</taxon>
    </lineage>
</organism>
<dbReference type="EMBL" id="Y13472">
    <property type="protein sequence ID" value="CAA73875.1"/>
    <property type="status" value="ALT_FRAME"/>
    <property type="molecule type" value="mRNA"/>
</dbReference>
<dbReference type="EMBL" id="AJ224901">
    <property type="protein sequence ID" value="CAA12204.1"/>
    <property type="molecule type" value="mRNA"/>
</dbReference>
<dbReference type="EMBL" id="AJ007676">
    <property type="protein sequence ID" value="CAA07604.1"/>
    <property type="molecule type" value="Genomic_DNA"/>
</dbReference>
<dbReference type="EMBL" id="AJ007677">
    <property type="protein sequence ID" value="CAA07604.1"/>
    <property type="status" value="JOINED"/>
    <property type="molecule type" value="Genomic_DNA"/>
</dbReference>
<dbReference type="EMBL" id="AJ007678">
    <property type="protein sequence ID" value="CAA07604.1"/>
    <property type="status" value="JOINED"/>
    <property type="molecule type" value="Genomic_DNA"/>
</dbReference>
<dbReference type="EMBL" id="AJ007679">
    <property type="protein sequence ID" value="CAA07604.1"/>
    <property type="status" value="JOINED"/>
    <property type="molecule type" value="Genomic_DNA"/>
</dbReference>
<dbReference type="EMBL" id="AJ007680">
    <property type="protein sequence ID" value="CAA07604.1"/>
    <property type="status" value="JOINED"/>
    <property type="molecule type" value="Genomic_DNA"/>
</dbReference>
<dbReference type="EMBL" id="AJ007681">
    <property type="protein sequence ID" value="CAA07604.1"/>
    <property type="status" value="JOINED"/>
    <property type="molecule type" value="Genomic_DNA"/>
</dbReference>
<dbReference type="EMBL" id="AJ007682">
    <property type="protein sequence ID" value="CAA07604.1"/>
    <property type="status" value="JOINED"/>
    <property type="molecule type" value="Genomic_DNA"/>
</dbReference>
<dbReference type="EMBL" id="AJ007683">
    <property type="protein sequence ID" value="CAA07604.1"/>
    <property type="status" value="JOINED"/>
    <property type="molecule type" value="Genomic_DNA"/>
</dbReference>
<dbReference type="EMBL" id="AJ007684">
    <property type="protein sequence ID" value="CAA07604.1"/>
    <property type="status" value="JOINED"/>
    <property type="molecule type" value="Genomic_DNA"/>
</dbReference>
<dbReference type="EMBL" id="AJ007685">
    <property type="protein sequence ID" value="CAA07604.1"/>
    <property type="status" value="JOINED"/>
    <property type="molecule type" value="Genomic_DNA"/>
</dbReference>
<dbReference type="EMBL" id="AJ007686">
    <property type="protein sequence ID" value="CAA07604.1"/>
    <property type="status" value="JOINED"/>
    <property type="molecule type" value="Genomic_DNA"/>
</dbReference>
<dbReference type="EMBL" id="AJ007687">
    <property type="protein sequence ID" value="CAA07604.1"/>
    <property type="status" value="JOINED"/>
    <property type="molecule type" value="Genomic_DNA"/>
</dbReference>
<dbReference type="EMBL" id="AJ007688">
    <property type="protein sequence ID" value="CAA07604.1"/>
    <property type="status" value="JOINED"/>
    <property type="molecule type" value="Genomic_DNA"/>
</dbReference>
<dbReference type="EMBL" id="AJ007689">
    <property type="protein sequence ID" value="CAA07604.1"/>
    <property type="status" value="JOINED"/>
    <property type="molecule type" value="Genomic_DNA"/>
</dbReference>
<dbReference type="EMBL" id="AJ007690">
    <property type="protein sequence ID" value="CAA07604.1"/>
    <property type="status" value="JOINED"/>
    <property type="molecule type" value="Genomic_DNA"/>
</dbReference>
<dbReference type="EMBL" id="AJ007691">
    <property type="protein sequence ID" value="CAA07604.1"/>
    <property type="status" value="JOINED"/>
    <property type="molecule type" value="Genomic_DNA"/>
</dbReference>
<dbReference type="EMBL" id="AJ007692">
    <property type="protein sequence ID" value="CAA07604.1"/>
    <property type="status" value="JOINED"/>
    <property type="molecule type" value="Genomic_DNA"/>
</dbReference>
<dbReference type="EMBL" id="AJ007693">
    <property type="protein sequence ID" value="CAA07604.1"/>
    <property type="status" value="JOINED"/>
    <property type="molecule type" value="Genomic_DNA"/>
</dbReference>
<dbReference type="EMBL" id="AJ007694">
    <property type="protein sequence ID" value="CAA07604.1"/>
    <property type="status" value="JOINED"/>
    <property type="molecule type" value="Genomic_DNA"/>
</dbReference>
<dbReference type="EMBL" id="AJ007695">
    <property type="protein sequence ID" value="CAA07604.1"/>
    <property type="status" value="JOINED"/>
    <property type="molecule type" value="Genomic_DNA"/>
</dbReference>
<dbReference type="EMBL" id="AJ007696">
    <property type="protein sequence ID" value="CAA07604.1"/>
    <property type="status" value="JOINED"/>
    <property type="molecule type" value="Genomic_DNA"/>
</dbReference>
<dbReference type="EMBL" id="AL136621">
    <property type="protein sequence ID" value="CAB66556.2"/>
    <property type="molecule type" value="mRNA"/>
</dbReference>
<dbReference type="EMBL" id="BX647944">
    <property type="protein sequence ID" value="CAH56193.1"/>
    <property type="molecule type" value="mRNA"/>
</dbReference>
<dbReference type="EMBL" id="AL137119">
    <property type="status" value="NOT_ANNOTATED_CDS"/>
    <property type="molecule type" value="Genomic_DNA"/>
</dbReference>
<dbReference type="EMBL" id="AL138688">
    <property type="status" value="NOT_ANNOTATED_CDS"/>
    <property type="molecule type" value="Genomic_DNA"/>
</dbReference>
<dbReference type="EMBL" id="CH471075">
    <property type="protein sequence ID" value="EAX08244.1"/>
    <property type="molecule type" value="Genomic_DNA"/>
</dbReference>
<dbReference type="EMBL" id="CH471075">
    <property type="protein sequence ID" value="EAX08247.1"/>
    <property type="molecule type" value="Genomic_DNA"/>
</dbReference>
<dbReference type="EMBL" id="BC036372">
    <property type="protein sequence ID" value="AAH36372.1"/>
    <property type="molecule type" value="mRNA"/>
</dbReference>
<dbReference type="EMBL" id="AF060181">
    <property type="protein sequence ID" value="AAC23591.1"/>
    <property type="status" value="ALT_FRAME"/>
    <property type="molecule type" value="mRNA"/>
</dbReference>
<dbReference type="EMBL" id="AF035374">
    <property type="protein sequence ID" value="AAB88464.1"/>
    <property type="status" value="ALT_FRAME"/>
    <property type="molecule type" value="mRNA"/>
</dbReference>
<dbReference type="EMBL" id="AF012126">
    <property type="protein sequence ID" value="AAC01561.1"/>
    <property type="molecule type" value="mRNA"/>
</dbReference>
<dbReference type="CCDS" id="CCDS45016.1">
    <molecule id="Q9UBW7-1"/>
</dbReference>
<dbReference type="PIR" id="T45119">
    <property type="entry name" value="T45119"/>
</dbReference>
<dbReference type="RefSeq" id="NP_001177893.1">
    <molecule id="Q9UBW7-1"/>
    <property type="nucleotide sequence ID" value="NM_001190964.4"/>
</dbReference>
<dbReference type="RefSeq" id="NP_001177894.1">
    <molecule id="Q9UBW7-1"/>
    <property type="nucleotide sequence ID" value="NM_001190965.4"/>
</dbReference>
<dbReference type="RefSeq" id="NP_001340086.1">
    <molecule id="Q9UBW7-1"/>
    <property type="nucleotide sequence ID" value="NM_001353157.2"/>
</dbReference>
<dbReference type="RefSeq" id="NP_001340088.1">
    <molecule id="Q9UBW7-1"/>
    <property type="nucleotide sequence ID" value="NM_001353159.2"/>
</dbReference>
<dbReference type="RefSeq" id="NP_001340091.1">
    <molecule id="Q9UBW7-1"/>
    <property type="nucleotide sequence ID" value="NM_001353162.3"/>
</dbReference>
<dbReference type="RefSeq" id="NP_001340093.1">
    <molecule id="Q9UBW7-1"/>
    <property type="nucleotide sequence ID" value="NM_001353164.2"/>
</dbReference>
<dbReference type="RefSeq" id="NP_003444.1">
    <molecule id="Q9UBW7-1"/>
    <property type="nucleotide sequence ID" value="NM_003453.6"/>
</dbReference>
<dbReference type="RefSeq" id="NP_932072.1">
    <molecule id="Q9UBW7-1"/>
    <property type="nucleotide sequence ID" value="NM_197968.4"/>
</dbReference>
<dbReference type="RefSeq" id="XP_005266577.1">
    <molecule id="Q9UBW7-1"/>
    <property type="nucleotide sequence ID" value="XM_005266520.4"/>
</dbReference>
<dbReference type="RefSeq" id="XP_011533526.1">
    <property type="nucleotide sequence ID" value="XM_011535224.2"/>
</dbReference>
<dbReference type="RefSeq" id="XP_016876218.1">
    <property type="nucleotide sequence ID" value="XM_017020729.1"/>
</dbReference>
<dbReference type="RefSeq" id="XP_047286544.1">
    <molecule id="Q9UBW7-1"/>
    <property type="nucleotide sequence ID" value="XM_047430588.1"/>
</dbReference>
<dbReference type="RefSeq" id="XP_047286545.1">
    <molecule id="Q9UBW7-1"/>
    <property type="nucleotide sequence ID" value="XM_047430589.1"/>
</dbReference>
<dbReference type="RefSeq" id="XP_047286546.1">
    <molecule id="Q9UBW7-1"/>
    <property type="nucleotide sequence ID" value="XM_047430590.1"/>
</dbReference>
<dbReference type="RefSeq" id="XP_047286547.1">
    <molecule id="Q9UBW7-1"/>
    <property type="nucleotide sequence ID" value="XM_047430591.1"/>
</dbReference>
<dbReference type="RefSeq" id="XP_054230903.1">
    <molecule id="Q9UBW7-1"/>
    <property type="nucleotide sequence ID" value="XM_054374928.1"/>
</dbReference>
<dbReference type="RefSeq" id="XP_054230904.1">
    <molecule id="Q9UBW7-1"/>
    <property type="nucleotide sequence ID" value="XM_054374929.1"/>
</dbReference>
<dbReference type="RefSeq" id="XP_054230905.1">
    <molecule id="Q9UBW7-1"/>
    <property type="nucleotide sequence ID" value="XM_054374930.1"/>
</dbReference>
<dbReference type="RefSeq" id="XP_054230906.1">
    <molecule id="Q9UBW7-1"/>
    <property type="nucleotide sequence ID" value="XM_054374931.1"/>
</dbReference>
<dbReference type="SMR" id="Q9UBW7"/>
<dbReference type="BioGRID" id="113534">
    <property type="interactions" value="271"/>
</dbReference>
<dbReference type="CORUM" id="Q9UBW7"/>
<dbReference type="FunCoup" id="Q9UBW7">
    <property type="interactions" value="4966"/>
</dbReference>
<dbReference type="IntAct" id="Q9UBW7">
    <property type="interactions" value="108"/>
</dbReference>
<dbReference type="MINT" id="Q9UBW7"/>
<dbReference type="STRING" id="9606.ENSP00000479904"/>
<dbReference type="GlyGen" id="Q9UBW7">
    <property type="glycosylation" value="3 sites, 1 N-linked glycan (1 site), 1 O-linked glycan (1 site)"/>
</dbReference>
<dbReference type="iPTMnet" id="Q9UBW7"/>
<dbReference type="PhosphoSitePlus" id="Q9UBW7"/>
<dbReference type="SwissPalm" id="Q9UBW7"/>
<dbReference type="BioMuta" id="ZMYM2"/>
<dbReference type="DMDM" id="17369677"/>
<dbReference type="jPOST" id="Q9UBW7"/>
<dbReference type="MassIVE" id="Q9UBW7"/>
<dbReference type="PaxDb" id="9606-ENSP00000479904"/>
<dbReference type="PeptideAtlas" id="Q9UBW7"/>
<dbReference type="ProteomicsDB" id="84085">
    <molecule id="Q9UBW7-1"/>
</dbReference>
<dbReference type="ProteomicsDB" id="84086">
    <molecule id="Q9UBW7-2"/>
</dbReference>
<dbReference type="Pumba" id="Q9UBW7"/>
<dbReference type="Antibodypedia" id="22277">
    <property type="antibodies" value="143 antibodies from 24 providers"/>
</dbReference>
<dbReference type="DNASU" id="7750"/>
<dbReference type="Ensembl" id="ENST00000382871.3">
    <molecule id="Q9UBW7-1"/>
    <property type="protein sequence ID" value="ENSP00000372324.2"/>
    <property type="gene ID" value="ENSG00000121741.17"/>
</dbReference>
<dbReference type="Ensembl" id="ENST00000382874.6">
    <molecule id="Q9UBW7-1"/>
    <property type="protein sequence ID" value="ENSP00000372327.2"/>
    <property type="gene ID" value="ENSG00000121741.17"/>
</dbReference>
<dbReference type="Ensembl" id="ENST00000610343.5">
    <molecule id="Q9UBW7-1"/>
    <property type="protein sequence ID" value="ENSP00000479904.1"/>
    <property type="gene ID" value="ENSG00000121741.17"/>
</dbReference>
<dbReference type="GeneID" id="7750"/>
<dbReference type="KEGG" id="hsa:7750"/>
<dbReference type="MANE-Select" id="ENST00000610343.5">
    <property type="protein sequence ID" value="ENSP00000479904.1"/>
    <property type="RefSeq nucleotide sequence ID" value="NM_197968.4"/>
    <property type="RefSeq protein sequence ID" value="NP_932072.1"/>
</dbReference>
<dbReference type="UCSC" id="uc031zxt.2">
    <molecule id="Q9UBW7-1"/>
    <property type="organism name" value="human"/>
</dbReference>
<dbReference type="AGR" id="HGNC:12989"/>
<dbReference type="CTD" id="7750"/>
<dbReference type="DisGeNET" id="7750"/>
<dbReference type="GeneCards" id="ZMYM2"/>
<dbReference type="HGNC" id="HGNC:12989">
    <property type="gene designation" value="ZMYM2"/>
</dbReference>
<dbReference type="HPA" id="ENSG00000121741">
    <property type="expression patterns" value="Low tissue specificity"/>
</dbReference>
<dbReference type="MalaCards" id="ZMYM2"/>
<dbReference type="MIM" id="602221">
    <property type="type" value="gene"/>
</dbReference>
<dbReference type="MIM" id="619522">
    <property type="type" value="phenotype"/>
</dbReference>
<dbReference type="neXtProt" id="NX_Q9UBW7"/>
<dbReference type="OpenTargets" id="ENSG00000121741"/>
<dbReference type="Orphanet" id="528084">
    <property type="disease" value="Non-specific syndromic intellectual disability"/>
</dbReference>
<dbReference type="PharmGKB" id="PA37569"/>
<dbReference type="VEuPathDB" id="HostDB:ENSG00000121741"/>
<dbReference type="eggNOG" id="ENOG502QQQ9">
    <property type="taxonomic scope" value="Eukaryota"/>
</dbReference>
<dbReference type="GeneTree" id="ENSGT00940000157028"/>
<dbReference type="HOGENOM" id="CLU_004099_0_0_1"/>
<dbReference type="InParanoid" id="Q9UBW7"/>
<dbReference type="OMA" id="KEPTCHF"/>
<dbReference type="OrthoDB" id="10025028at2759"/>
<dbReference type="PAN-GO" id="Q9UBW7">
    <property type="GO annotations" value="0 GO annotations based on evolutionary models"/>
</dbReference>
<dbReference type="PhylomeDB" id="Q9UBW7"/>
<dbReference type="TreeFam" id="TF336988"/>
<dbReference type="PathwayCommons" id="Q9UBW7"/>
<dbReference type="Reactome" id="R-HSA-1839117">
    <property type="pathway name" value="Signaling by cytosolic FGFR1 fusion mutants"/>
</dbReference>
<dbReference type="Reactome" id="R-HSA-5655302">
    <property type="pathway name" value="Signaling by FGFR1 in disease"/>
</dbReference>
<dbReference type="Reactome" id="R-HSA-9703465">
    <property type="pathway name" value="Signaling by FLT3 fusion proteins"/>
</dbReference>
<dbReference type="SignaLink" id="Q9UBW7"/>
<dbReference type="SIGNOR" id="Q9UBW7"/>
<dbReference type="BioGRID-ORCS" id="7750">
    <property type="hits" value="25 hits in 1170 CRISPR screens"/>
</dbReference>
<dbReference type="CD-CODE" id="B5B9A610">
    <property type="entry name" value="PML body"/>
</dbReference>
<dbReference type="ChiTaRS" id="ZMYM2">
    <property type="organism name" value="human"/>
</dbReference>
<dbReference type="GeneWiki" id="ZMYM2"/>
<dbReference type="GenomeRNAi" id="7750"/>
<dbReference type="Pharos" id="Q9UBW7">
    <property type="development level" value="Tbio"/>
</dbReference>
<dbReference type="PRO" id="PR:Q9UBW7"/>
<dbReference type="Proteomes" id="UP000005640">
    <property type="component" value="Chromosome 13"/>
</dbReference>
<dbReference type="RNAct" id="Q9UBW7">
    <property type="molecule type" value="protein"/>
</dbReference>
<dbReference type="Bgee" id="ENSG00000121741">
    <property type="expression patterns" value="Expressed in sperm and 207 other cell types or tissues"/>
</dbReference>
<dbReference type="ExpressionAtlas" id="Q9UBW7">
    <property type="expression patterns" value="baseline and differential"/>
</dbReference>
<dbReference type="GO" id="GO:0005829">
    <property type="term" value="C:cytosol"/>
    <property type="evidence" value="ECO:0000304"/>
    <property type="project" value="Reactome"/>
</dbReference>
<dbReference type="GO" id="GO:0005634">
    <property type="term" value="C:nucleus"/>
    <property type="evidence" value="ECO:0000314"/>
    <property type="project" value="UniProtKB"/>
</dbReference>
<dbReference type="GO" id="GO:0016605">
    <property type="term" value="C:PML body"/>
    <property type="evidence" value="ECO:0000314"/>
    <property type="project" value="UniProtKB"/>
</dbReference>
<dbReference type="GO" id="GO:0031624">
    <property type="term" value="F:ubiquitin conjugating enzyme binding"/>
    <property type="evidence" value="ECO:0000353"/>
    <property type="project" value="UniProtKB"/>
</dbReference>
<dbReference type="GO" id="GO:0008270">
    <property type="term" value="F:zinc ion binding"/>
    <property type="evidence" value="ECO:0000303"/>
    <property type="project" value="UniProtKB"/>
</dbReference>
<dbReference type="GO" id="GO:0045892">
    <property type="term" value="P:negative regulation of DNA-templated transcription"/>
    <property type="evidence" value="ECO:0000314"/>
    <property type="project" value="UniProtKB"/>
</dbReference>
<dbReference type="InterPro" id="IPR021893">
    <property type="entry name" value="DUF3504"/>
</dbReference>
<dbReference type="InterPro" id="IPR011017">
    <property type="entry name" value="TRASH_dom"/>
</dbReference>
<dbReference type="InterPro" id="IPR010507">
    <property type="entry name" value="Znf_MYM"/>
</dbReference>
<dbReference type="InterPro" id="IPR051284">
    <property type="entry name" value="ZnF_MYMT-QRICH1"/>
</dbReference>
<dbReference type="PANTHER" id="PTHR45736">
    <property type="entry name" value="ZINC FINGER MYM-TYPE PROTEIN"/>
    <property type="match status" value="1"/>
</dbReference>
<dbReference type="PANTHER" id="PTHR45736:SF6">
    <property type="entry name" value="ZINC FINGER MYM-TYPE PROTEIN 2"/>
    <property type="match status" value="1"/>
</dbReference>
<dbReference type="Pfam" id="PF12012">
    <property type="entry name" value="DUF3504"/>
    <property type="match status" value="1"/>
</dbReference>
<dbReference type="Pfam" id="PF06467">
    <property type="entry name" value="zf-FCS"/>
    <property type="match status" value="9"/>
</dbReference>
<dbReference type="SMART" id="SM00746">
    <property type="entry name" value="TRASH"/>
    <property type="match status" value="9"/>
</dbReference>
<dbReference type="SUPFAM" id="SSF57716">
    <property type="entry name" value="Glucocorticoid receptor-like (DNA-binding domain)"/>
    <property type="match status" value="1"/>
</dbReference>
<protein>
    <recommendedName>
        <fullName>Zinc finger MYM-type protein 2</fullName>
    </recommendedName>
    <alternativeName>
        <fullName>Fused in myeloproliferative disorders protein</fullName>
    </alternativeName>
    <alternativeName>
        <fullName>Rearranged in atypical myeloproliferative disorder protein</fullName>
    </alternativeName>
    <alternativeName>
        <fullName>Zinc finger protein 198</fullName>
    </alternativeName>
</protein>
<feature type="chain" id="PRO_0000191382" description="Zinc finger MYM-type protein 2">
    <location>
        <begin position="1"/>
        <end position="1377"/>
    </location>
</feature>
<feature type="zinc finger region" description="MYM-type 1" evidence="2">
    <location>
        <begin position="327"/>
        <end position="363"/>
    </location>
</feature>
<feature type="zinc finger region" description="MYM-type 2" evidence="2">
    <location>
        <begin position="369"/>
        <end position="409"/>
    </location>
</feature>
<feature type="zinc finger region" description="MYM-type 3" evidence="2">
    <location>
        <begin position="421"/>
        <end position="456"/>
    </location>
</feature>
<feature type="zinc finger region" description="MYM-type 4" evidence="2">
    <location>
        <begin position="463"/>
        <end position="502"/>
    </location>
</feature>
<feature type="zinc finger region" description="MYM-type 5" evidence="2">
    <location>
        <begin position="533"/>
        <end position="570"/>
    </location>
</feature>
<feature type="zinc finger region" description="MYM-type 6" evidence="2">
    <location>
        <begin position="636"/>
        <end position="671"/>
    </location>
</feature>
<feature type="zinc finger region" description="MYM-type 7" evidence="2">
    <location>
        <begin position="723"/>
        <end position="758"/>
    </location>
</feature>
<feature type="zinc finger region" description="MYM-type 8" evidence="2">
    <location>
        <begin position="764"/>
        <end position="799"/>
    </location>
</feature>
<feature type="region of interest" description="Disordered" evidence="3">
    <location>
        <begin position="85"/>
        <end position="177"/>
    </location>
</feature>
<feature type="region of interest" description="Disordered" evidence="3">
    <location>
        <begin position="273"/>
        <end position="305"/>
    </location>
</feature>
<feature type="region of interest" description="Disordered" evidence="3">
    <location>
        <begin position="983"/>
        <end position="1002"/>
    </location>
</feature>
<feature type="region of interest" description="Disordered" evidence="3">
    <location>
        <begin position="1028"/>
        <end position="1064"/>
    </location>
</feature>
<feature type="compositionally biased region" description="Polar residues" evidence="3">
    <location>
        <begin position="85"/>
        <end position="115"/>
    </location>
</feature>
<feature type="compositionally biased region" description="Polar residues" evidence="3">
    <location>
        <begin position="127"/>
        <end position="138"/>
    </location>
</feature>
<feature type="compositionally biased region" description="Basic and acidic residues" evidence="3">
    <location>
        <begin position="139"/>
        <end position="152"/>
    </location>
</feature>
<feature type="compositionally biased region" description="Polar residues" evidence="3">
    <location>
        <begin position="153"/>
        <end position="164"/>
    </location>
</feature>
<feature type="compositionally biased region" description="Polar residues" evidence="3">
    <location>
        <begin position="284"/>
        <end position="298"/>
    </location>
</feature>
<feature type="compositionally biased region" description="Basic residues" evidence="3">
    <location>
        <begin position="1039"/>
        <end position="1050"/>
    </location>
</feature>
<feature type="site" description="Breakpoint for translocation to form ZMYM2-FGFR1">
    <location>
        <begin position="913"/>
        <end position="914"/>
    </location>
</feature>
<feature type="modified residue" description="Phosphoserine" evidence="12">
    <location>
        <position position="159"/>
    </location>
</feature>
<feature type="modified residue" description="Phosphoserine" evidence="10 11 12">
    <location>
        <position position="305"/>
    </location>
</feature>
<feature type="modified residue" description="Phosphoserine" evidence="9 11 12">
    <location>
        <position position="838"/>
    </location>
</feature>
<feature type="modified residue" description="Phosphoserine" evidence="11">
    <location>
        <position position="958"/>
    </location>
</feature>
<feature type="modified residue" description="Phosphoserine" evidence="1">
    <location>
        <position position="1064"/>
    </location>
</feature>
<feature type="modified residue" description="Phosphothreonine" evidence="9 10">
    <location>
        <position position="1376"/>
    </location>
</feature>
<feature type="cross-link" description="Glycyl lysine isopeptide (Lys-Gly) (interchain with G-Cter in SUMO2)" evidence="16">
    <location>
        <position position="48"/>
    </location>
</feature>
<feature type="cross-link" description="Glycyl lysine isopeptide (Lys-Gly) (interchain with G-Cter in SUMO2)" evidence="13 14 15 16">
    <location>
        <position position="88"/>
    </location>
</feature>
<feature type="cross-link" description="Glycyl lysine isopeptide (Lys-Gly) (interchain with G-Cter in SUMO2)" evidence="13 14 16">
    <location>
        <position position="98"/>
    </location>
</feature>
<feature type="cross-link" description="Glycyl lysine isopeptide (Lys-Gly) (interchain with G-Cter in SUMO2)" evidence="13 16">
    <location>
        <position position="104"/>
    </location>
</feature>
<feature type="cross-link" description="Glycyl lysine isopeptide (Lys-Gly) (interchain with G-Cter in SUMO2)" evidence="16">
    <location>
        <position position="147"/>
    </location>
</feature>
<feature type="cross-link" description="Glycyl lysine isopeptide (Lys-Gly) (interchain with G-Cter in SUMO2)" evidence="13 16">
    <location>
        <position position="253"/>
    </location>
</feature>
<feature type="cross-link" description="Glycyl lysine isopeptide (Lys-Gly) (interchain with G-Cter in SUMO2)" evidence="13 15 16">
    <location>
        <position position="297"/>
    </location>
</feature>
<feature type="cross-link" description="Glycyl lysine isopeptide (Lys-Gly) (interchain with G-Cter in SUMO2)" evidence="16">
    <location>
        <position position="312"/>
    </location>
</feature>
<feature type="cross-link" description="Glycyl lysine isopeptide (Lys-Gly) (interchain with G-Cter in SUMO2)" evidence="15 16">
    <location>
        <position position="325"/>
    </location>
</feature>
<feature type="cross-link" description="Glycyl lysine isopeptide (Lys-Gly) (interchain with G-Cter in SUMO2)" evidence="16">
    <location>
        <position position="348"/>
    </location>
</feature>
<feature type="cross-link" description="Glycyl lysine isopeptide (Lys-Gly) (interchain with G-Cter in SUMO2)" evidence="16">
    <location>
        <position position="366"/>
    </location>
</feature>
<feature type="cross-link" description="Glycyl lysine isopeptide (Lys-Gly) (interchain with G-Cter in SUMO2)" evidence="16">
    <location>
        <position position="417"/>
    </location>
</feature>
<feature type="cross-link" description="Glycyl lysine isopeptide (Lys-Gly) (interchain with G-Cter in SUMO2)" evidence="13 14 16">
    <location>
        <position position="441"/>
    </location>
</feature>
<feature type="cross-link" description="Glycyl lysine isopeptide (Lys-Gly) (interchain with G-Cter in SUMO2)" evidence="16">
    <location>
        <position position="491"/>
    </location>
</feature>
<feature type="cross-link" description="Glycyl lysine isopeptide (Lys-Gly) (interchain with G-Cter in SUMO2)" evidence="16">
    <location>
        <position position="503"/>
    </location>
</feature>
<feature type="cross-link" description="Glycyl lysine isopeptide (Lys-Gly) (interchain with G-Cter in SUMO2)" evidence="14 16">
    <location>
        <position position="513"/>
    </location>
</feature>
<feature type="cross-link" description="Glycyl lysine isopeptide (Lys-Gly) (interchain with G-Cter in SUMO2)" evidence="13 14 15 16">
    <location>
        <position position="529"/>
    </location>
</feature>
<feature type="cross-link" description="Glycyl lysine isopeptide (Lys-Gly) (interchain with G-Cter in SUMO2)" evidence="13 14 16">
    <location>
        <position position="532"/>
    </location>
</feature>
<feature type="cross-link" description="Glycyl lysine isopeptide (Lys-Gly) (interchain with G-Cter in SUMO2)" evidence="15 16">
    <location>
        <position position="576"/>
    </location>
</feature>
<feature type="cross-link" description="Glycyl lysine isopeptide (Lys-Gly) (interchain with G-Cter in SUMO2)" evidence="16">
    <location>
        <position position="603"/>
    </location>
</feature>
<feature type="cross-link" description="Glycyl lysine isopeptide (Lys-Gly) (interchain with G-Cter in SUMO2)" evidence="13 16">
    <location>
        <position position="649"/>
    </location>
</feature>
<feature type="cross-link" description="Glycyl lysine isopeptide (Lys-Gly) (interchain with G-Cter in SUMO2)" evidence="16">
    <location>
        <position position="658"/>
    </location>
</feature>
<feature type="cross-link" description="Glycyl lysine isopeptide (Lys-Gly) (interchain with G-Cter in SUMO2)" evidence="16">
    <location>
        <position position="688"/>
    </location>
</feature>
<feature type="cross-link" description="Glycyl lysine isopeptide (Lys-Gly) (interchain with G-Cter in SUMO2)" evidence="14 16">
    <location>
        <position position="700"/>
    </location>
</feature>
<feature type="cross-link" description="Glycyl lysine isopeptide (Lys-Gly) (interchain with G-Cter in SUMO2)" evidence="16">
    <location>
        <position position="709"/>
    </location>
</feature>
<feature type="cross-link" description="Glycyl lysine isopeptide (Lys-Gly) (interchain with G-Cter in SUMO2)" evidence="16">
    <location>
        <position position="764"/>
    </location>
</feature>
<feature type="cross-link" description="Glycyl lysine isopeptide (Lys-Gly) (interchain with G-Cter in SUMO2)" evidence="16">
    <location>
        <position position="788"/>
    </location>
</feature>
<feature type="cross-link" description="Glycyl lysine isopeptide (Lys-Gly) (interchain with G-Cter in SUMO2)" evidence="16">
    <location>
        <position position="812"/>
    </location>
</feature>
<feature type="cross-link" description="Glycyl lysine isopeptide (Lys-Gly) (interchain with G-Cter in SUMO2)" evidence="16">
    <location>
        <position position="829"/>
    </location>
</feature>
<feature type="splice variant" id="VSP_039065" description="In isoform 2." evidence="7">
    <location>
        <begin position="165"/>
        <end position="251"/>
    </location>
</feature>
<feature type="splice variant" id="VSP_039066" description="In isoform 2." evidence="7">
    <original>KYGKLTTCTGCRTQCRFFDMT</original>
    <variation>VSRNVNGVQGLNIFEHCYYCH</variation>
    <location>
        <begin position="529"/>
        <end position="549"/>
    </location>
</feature>
<feature type="splice variant" id="VSP_039067" description="In isoform 2." evidence="7">
    <location>
        <begin position="550"/>
        <end position="1377"/>
    </location>
</feature>
<feature type="sequence variant" id="VAR_086274" description="Found in a patient with congenital anomalies of the kidney and urinary tract; likely benign; no effect on localization to the nucleus." evidence="5">
    <location>
        <position position="61"/>
    </location>
</feature>
<feature type="sequence variant" id="VAR_086275" description="Found in a patient with congenital anomalies of the kidney and urinary tract; likely benign; no effect on localization to the nucleus; no effect on transcriptional repression activity." evidence="5">
    <original>E</original>
    <variation>A</variation>
    <location>
        <position position="126"/>
    </location>
</feature>
<feature type="sequence variant" id="VAR_086276" description="In NECRC." evidence="5">
    <location>
        <begin position="208"/>
        <end position="1377"/>
    </location>
</feature>
<feature type="sequence variant" id="VAR_086277" description="Found in a patient with congenital anomalies of the kidney and urinary tract; likely benign; no effect on localization to the nucleus; no effect on transcriptional repression activity." evidence="5">
    <original>I</original>
    <variation>V</variation>
    <location>
        <position position="387"/>
    </location>
</feature>
<feature type="sequence variant" id="VAR_086278" description="In NECRC; does not localize to the nucleus; decreased interaction with FOXP1 and FOXP2." evidence="5">
    <location>
        <begin position="398"/>
        <end position="1377"/>
    </location>
</feature>
<feature type="sequence variant" id="VAR_086279" description="In NECRC; does not localize to the nucleus; loss of interaction with FOXP1 and FOXP2." evidence="5">
    <location>
        <begin position="540"/>
        <end position="1377"/>
    </location>
</feature>
<feature type="sequence variant" id="VAR_086280" description="Found in a patient with congenital anomalies of the kidney and urinary tract; likely benign; no effect on localization to the nucleus; no effect on transcriptional repression activity." evidence="5">
    <original>K</original>
    <variation>R</variation>
    <location>
        <position position="649"/>
    </location>
</feature>
<feature type="sequence variant" id="VAR_086281" description="In NECRC." evidence="5">
    <location>
        <begin position="722"/>
        <end position="1377"/>
    </location>
</feature>
<feature type="sequence variant" id="VAR_086282" description="Found in a patient with congenital anomalies of the kidney and urinary tract; likely benign; no effect on localization to the nucleus; no effect on transcriptional repression activity." evidence="5">
    <original>Y</original>
    <variation>H</variation>
    <location>
        <position position="763"/>
    </location>
</feature>
<feature type="sequence variant" id="VAR_086283" description="Found in a patient with congenital anomalies of the kidney and urinary tract; likely benign; no effect on localization to the nucleus; requires 2 nucleotide substitutions." evidence="5">
    <original>Y</original>
    <variation>L</variation>
    <location>
        <position position="763"/>
    </location>
</feature>
<feature type="sequence variant" id="VAR_086284" description="Found in a patient with congenital anomalies of the kidney and urinary tract; likely benign; no effect on localization to the nucleus; no effect on transcriptional repression activity." evidence="5">
    <original>G</original>
    <variation>E</variation>
    <location>
        <position position="775"/>
    </location>
</feature>
<feature type="sequence variant" id="VAR_086285" description="In NECRC." evidence="5">
    <location>
        <begin position="780"/>
        <end position="1377"/>
    </location>
</feature>
<feature type="sequence variant" id="VAR_086286" description="Found in a patient with congenital anomalies of the kidney and urinary tract; likely benign; no effect on localization to the nucleus." evidence="5">
    <location>
        <position position="997"/>
    </location>
</feature>
<feature type="sequence variant" id="VAR_086287" description="Found in a patient with congenital anomalies of the kidney and urinary tract; likely benign; no effect on localization to the nucleus; no effect on transcriptional repression activity." evidence="5">
    <original>E</original>
    <variation>K</variation>
    <location>
        <position position="1031"/>
    </location>
</feature>
<feature type="sequence variant" id="VAR_086288" description="In NECRC." evidence="5">
    <location>
        <begin position="1082"/>
        <end position="1377"/>
    </location>
</feature>
<feature type="sequence conflict" description="In Ref. 4; CAH56193." evidence="8" ref="4">
    <original>S</original>
    <variation>P</variation>
    <location>
        <position position="102"/>
    </location>
</feature>
<feature type="sequence conflict" description="In Ref. 7; AAH36372." evidence="8" ref="7">
    <original>K</original>
    <variation>E</variation>
    <location>
        <position position="110"/>
    </location>
</feature>
<feature type="sequence conflict" description="In Ref. 4; CAB66556." evidence="8" ref="4">
    <original>L</original>
    <variation>V</variation>
    <location>
        <position position="304"/>
    </location>
</feature>
<feature type="sequence conflict" description="In Ref. 4; CAB66556." evidence="8" ref="4">
    <original>T</original>
    <variation>S</variation>
    <location>
        <position position="330"/>
    </location>
</feature>
<feature type="sequence conflict" description="In Ref. 1; CAA73875." evidence="8" ref="1">
    <original>DK</original>
    <variation>EQ</variation>
    <location>
        <begin position="411"/>
        <end position="412"/>
    </location>
</feature>
<feature type="sequence conflict" description="In Ref. 4; CAB66556." evidence="8" ref="4">
    <original>R</original>
    <variation>G</variation>
    <location>
        <position position="424"/>
    </location>
</feature>
<feature type="sequence conflict" description="In Ref. 1; CAA73875." evidence="8" ref="1">
    <original>K</original>
    <variation>G</variation>
    <location>
        <position position="736"/>
    </location>
</feature>
<feature type="sequence conflict" description="In Ref. 7; AAH36372." evidence="8" ref="7">
    <original>T</original>
    <variation>I</variation>
    <location>
        <position position="856"/>
    </location>
</feature>
<feature type="sequence conflict" description="In Ref. 9; AAB88464." evidence="8" ref="9">
    <location>
        <position position="967"/>
    </location>
</feature>
<feature type="sequence conflict" description="In Ref. 9; AAB88464." evidence="8" ref="9">
    <original>DF</original>
    <variation>IS</variation>
    <location>
        <begin position="1009"/>
        <end position="1010"/>
    </location>
</feature>
<feature type="sequence conflict" description="In Ref. 9; AAB88464." evidence="8" ref="9">
    <location>
        <position position="1016"/>
    </location>
</feature>
<feature type="sequence conflict" description="In Ref. 7; AAH36372." evidence="8" ref="7">
    <original>C</original>
    <variation>R</variation>
    <location>
        <position position="1259"/>
    </location>
</feature>
<sequence>MDTSSVGGLELTDQTPVLLGSTAMATSLTNVGNSFSGPANPLVSRSNKFQNSSVEDDDDVVFIEPVQPPPPSVPVVADQRTITFTSSKNEELQGNDSKITPSSKELASQKGSVSETIVIDDEEDMETNQGQEKNSSNFIERRPPETKNRTNDVDFSTSSFSRSKVNAGMGNSGITTEPDSEIQIANVTTLETGVSSVNDGQLENTDGRDMNLMITHVTSLQNTNLGDVSNGLQSSNFGVNIQTYTPSLTSQTKTGVGPFNPGRMNVAGDVFQNGESATHHNPDSWISQSASFPRNQKQPGVDSLSPVASLPKQIFQPSVQQQPTKPVKVTCANCKKPLQKGQTAYQRKGSAHLFCSTTCLSSFSHKPAPKKLCVMCKKDITTMKGTIVAQVDSSESFQEFCSTSCLSLYEDKQNPTKGALNKSRCTICGKLTEIRHEVSFKNMTHKLCSDHCFNRYRMANGLIMNCCEQCGEYLPSKGAGNNVLVIDGQQKRFCCQSCVSEYKQVGSHPSFLKEVRDHMQDSFLMQPEKYGKLTTCTGCRTQCRFFDMTQCIGPNGYMEPYCSTACMNSHKTKYAKSQSLGIICHFCKRNSLPQYQATMPDGKLYNFCNSSCVAKFQALSMQSSPNGQFVAPSDIQLKCNYCKNSFCSKPEILEWENKVHQFCSKTCSDDYKKLHCIVTYCEYCQEEKTLHETVNFSGVKRPFCSEGCKLLYKQDFARRLGLRCVTCNYCSQLCKKGATKELDGVVRDFCSEDCCKKFQDWYYKAARCDCCKSQGTLKERVQWRGEMKHFCDQHCLLRFYCQQNEPNMTTQKGPENLHYDQGCQTSRTKMTGSAPPPSPTPNKEMKNKAVLCKPLTMTKATYCKPHMQTKSCQTDDTWRTEYVPVPIPVPVYIPVPMHMYSQNIPVPTTVPVPVPVPVFLPAPLDSSEKIPAAIEELKSKVSSDALDTELLTMTDMMSEDEGKTETTNINSVIIETDIIGSDLLKNSDPETQSSMPDVPYEPDLDIEIDFPRAAEELDMENEFLLPPVFGEEYEEQPRPRSKKKGAKRKAVSGYQSHDDSSDNSECSFPFKYTYGVNAWKHWVKTRQLDEDLLVLDELKSSKSVKLKEDLLSHTTAELNYGLAHFVNEIRRPNGENYAPDSIYYLCLGIQEYLCGSNRKDNIFIDPGYQTFEQELNKILRSWQPSILPDGSIFSRVEEDYLWRIKQLGSHSPVALLNTLFYFNTKYFGLKTVEQHLRLSFGTVFRHWKKNPLTMENKACLRYQVSSLCGTDNEDKITTGKRKHEDDEPVFEQIENTANPSRCPVKMFECYLSKSPQNLNQRMDVFYLQPECSSSTDSPVWYTSTSLDRNTLENMLVRVLLVKDIYDKDNYELDEDTD</sequence>
<accession>Q9UBW7</accession>
<accession>A6NDG0</accession>
<accession>A6NI02</accession>
<accession>O43212</accession>
<accession>O43434</accession>
<accession>O60898</accession>
<accession>Q5W0Q4</accession>
<accession>Q5W0T3</accession>
<accession>Q63HP0</accession>
<accession>Q8NE39</accession>
<accession>Q9H0V5</accession>
<accession>Q9H538</accession>
<accession>Q9UEU2</accession>
<reference key="1">
    <citation type="journal article" date="1998" name="Proc. Natl. Acad. Sci. U.S.A.">
        <title>Fibroblast growth factor receptor 1 is fused to FIM in stem-cell myeloproliferative disorder with t(8;13)(p12;q12).</title>
        <authorList>
            <person name="Popovici C."/>
            <person name="Adelaide J."/>
            <person name="Ollendorff V."/>
            <person name="Chaffanet M."/>
            <person name="Guasch G."/>
            <person name="Jacrot M."/>
            <person name="Leroux D."/>
            <person name="Birnbaum D."/>
            <person name="Pebusque M.-J."/>
        </authorList>
    </citation>
    <scope>NUCLEOTIDE SEQUENCE [MRNA] (ISOFORM 1)</scope>
    <scope>CHROMOSOMAL TRANSLOCATION</scope>
</reference>
<reference key="2">
    <citation type="journal article" date="1998" name="Blood">
        <title>Consistent fusion of ZNF198 to the fibroblast growth factor receptor-1 in the t(8;13)(p11;q12) myeloproliferative syndrome.</title>
        <authorList>
            <person name="Reiter A."/>
            <person name="Sohal J."/>
            <person name="Kulkarni S."/>
            <person name="Chase A."/>
            <person name="Macdonald D.H.C."/>
            <person name="Aguiar R.C.T."/>
            <person name="Goncalves C."/>
            <person name="Hernandez J.M."/>
            <person name="Jennings B.A."/>
            <person name="Goldman J.M."/>
            <person name="Cross N.C.P."/>
        </authorList>
    </citation>
    <scope>NUCLEOTIDE SEQUENCE [MRNA] (ISOFORM 1)</scope>
</reference>
<reference key="3">
    <citation type="journal article" date="1999" name="Genomics">
        <title>The genomic structure of ZNF198 and location of breakpoints in the t(8;13) myeloproliferative syndrome.</title>
        <authorList>
            <person name="Kulkarni S."/>
            <person name="Reiter A.J."/>
            <person name="Smedley D."/>
            <person name="Goldman J.M."/>
            <person name="Cross N.C.P."/>
        </authorList>
    </citation>
    <scope>NUCLEOTIDE SEQUENCE [GENOMIC DNA]</scope>
</reference>
<reference key="4">
    <citation type="journal article" date="2001" name="Genome Res.">
        <title>Towards a catalog of human genes and proteins: sequencing and analysis of 500 novel complete protein coding human cDNAs.</title>
        <authorList>
            <person name="Wiemann S."/>
            <person name="Weil B."/>
            <person name="Wellenreuther R."/>
            <person name="Gassenhuber J."/>
            <person name="Glassl S."/>
            <person name="Ansorge W."/>
            <person name="Boecher M."/>
            <person name="Bloecker H."/>
            <person name="Bauersachs S."/>
            <person name="Blum H."/>
            <person name="Lauber J."/>
            <person name="Duesterhoeft A."/>
            <person name="Beyer A."/>
            <person name="Koehrer K."/>
            <person name="Strack N."/>
            <person name="Mewes H.-W."/>
            <person name="Ottenwaelder B."/>
            <person name="Obermaier B."/>
            <person name="Tampe J."/>
            <person name="Heubner D."/>
            <person name="Wambutt R."/>
            <person name="Korn B."/>
            <person name="Klein M."/>
            <person name="Poustka A."/>
        </authorList>
    </citation>
    <scope>NUCLEOTIDE SEQUENCE [LARGE SCALE MRNA] (ISOFORM 2)</scope>
    <source>
        <tissue>Brain</tissue>
    </source>
</reference>
<reference key="5">
    <citation type="journal article" date="2007" name="BMC Genomics">
        <title>The full-ORF clone resource of the German cDNA consortium.</title>
        <authorList>
            <person name="Bechtel S."/>
            <person name="Rosenfelder H."/>
            <person name="Duda A."/>
            <person name="Schmidt C.P."/>
            <person name="Ernst U."/>
            <person name="Wellenreuther R."/>
            <person name="Mehrle A."/>
            <person name="Schuster C."/>
            <person name="Bahr A."/>
            <person name="Bloecker H."/>
            <person name="Heubner D."/>
            <person name="Hoerlein A."/>
            <person name="Michel G."/>
            <person name="Wedler H."/>
            <person name="Koehrer K."/>
            <person name="Ottenwaelder B."/>
            <person name="Poustka A."/>
            <person name="Wiemann S."/>
            <person name="Schupp I."/>
        </authorList>
    </citation>
    <scope>NUCLEOTIDE SEQUENCE [LARGE SCALE MRNA] (ISOFORM 1)</scope>
    <source>
        <tissue>Endometrial tumor</tissue>
    </source>
</reference>
<reference key="6">
    <citation type="journal article" date="2004" name="Nature">
        <title>The DNA sequence and analysis of human chromosome 13.</title>
        <authorList>
            <person name="Dunham A."/>
            <person name="Matthews L.H."/>
            <person name="Burton J."/>
            <person name="Ashurst J.L."/>
            <person name="Howe K.L."/>
            <person name="Ashcroft K.J."/>
            <person name="Beare D.M."/>
            <person name="Burford D.C."/>
            <person name="Hunt S.E."/>
            <person name="Griffiths-Jones S."/>
            <person name="Jones M.C."/>
            <person name="Keenan S.J."/>
            <person name="Oliver K."/>
            <person name="Scott C.E."/>
            <person name="Ainscough R."/>
            <person name="Almeida J.P."/>
            <person name="Ambrose K.D."/>
            <person name="Andrews D.T."/>
            <person name="Ashwell R.I.S."/>
            <person name="Babbage A.K."/>
            <person name="Bagguley C.L."/>
            <person name="Bailey J."/>
            <person name="Bannerjee R."/>
            <person name="Barlow K.F."/>
            <person name="Bates K."/>
            <person name="Beasley H."/>
            <person name="Bird C.P."/>
            <person name="Bray-Allen S."/>
            <person name="Brown A.J."/>
            <person name="Brown J.Y."/>
            <person name="Burrill W."/>
            <person name="Carder C."/>
            <person name="Carter N.P."/>
            <person name="Chapman J.C."/>
            <person name="Clamp M.E."/>
            <person name="Clark S.Y."/>
            <person name="Clarke G."/>
            <person name="Clee C.M."/>
            <person name="Clegg S.C."/>
            <person name="Cobley V."/>
            <person name="Collins J.E."/>
            <person name="Corby N."/>
            <person name="Coville G.J."/>
            <person name="Deloukas P."/>
            <person name="Dhami P."/>
            <person name="Dunham I."/>
            <person name="Dunn M."/>
            <person name="Earthrowl M.E."/>
            <person name="Ellington A.G."/>
            <person name="Faulkner L."/>
            <person name="Frankish A.G."/>
            <person name="Frankland J."/>
            <person name="French L."/>
            <person name="Garner P."/>
            <person name="Garnett J."/>
            <person name="Gilbert J.G.R."/>
            <person name="Gilson C.J."/>
            <person name="Ghori J."/>
            <person name="Grafham D.V."/>
            <person name="Gribble S.M."/>
            <person name="Griffiths C."/>
            <person name="Hall R.E."/>
            <person name="Hammond S."/>
            <person name="Harley J.L."/>
            <person name="Hart E.A."/>
            <person name="Heath P.D."/>
            <person name="Howden P.J."/>
            <person name="Huckle E.J."/>
            <person name="Hunt P.J."/>
            <person name="Hunt A.R."/>
            <person name="Johnson C."/>
            <person name="Johnson D."/>
            <person name="Kay M."/>
            <person name="Kimberley A.M."/>
            <person name="King A."/>
            <person name="Laird G.K."/>
            <person name="Langford C.J."/>
            <person name="Lawlor S."/>
            <person name="Leongamornlert D.A."/>
            <person name="Lloyd D.M."/>
            <person name="Lloyd C."/>
            <person name="Loveland J.E."/>
            <person name="Lovell J."/>
            <person name="Martin S."/>
            <person name="Mashreghi-Mohammadi M."/>
            <person name="McLaren S.J."/>
            <person name="McMurray A."/>
            <person name="Milne S."/>
            <person name="Moore M.J.F."/>
            <person name="Nickerson T."/>
            <person name="Palmer S.A."/>
            <person name="Pearce A.V."/>
            <person name="Peck A.I."/>
            <person name="Pelan S."/>
            <person name="Phillimore B."/>
            <person name="Porter K.M."/>
            <person name="Rice C.M."/>
            <person name="Searle S."/>
            <person name="Sehra H.K."/>
            <person name="Shownkeen R."/>
            <person name="Skuce C.D."/>
            <person name="Smith M."/>
            <person name="Steward C.A."/>
            <person name="Sycamore N."/>
            <person name="Tester J."/>
            <person name="Thomas D.W."/>
            <person name="Tracey A."/>
            <person name="Tromans A."/>
            <person name="Tubby B."/>
            <person name="Wall M."/>
            <person name="Wallis J.M."/>
            <person name="West A.P."/>
            <person name="Whitehead S.L."/>
            <person name="Willey D.L."/>
            <person name="Wilming L."/>
            <person name="Wray P.W."/>
            <person name="Wright M.W."/>
            <person name="Young L."/>
            <person name="Coulson A."/>
            <person name="Durbin R.M."/>
            <person name="Hubbard T."/>
            <person name="Sulston J.E."/>
            <person name="Beck S."/>
            <person name="Bentley D.R."/>
            <person name="Rogers J."/>
            <person name="Ross M.T."/>
        </authorList>
    </citation>
    <scope>NUCLEOTIDE SEQUENCE [LARGE SCALE GENOMIC DNA]</scope>
</reference>
<reference key="7">
    <citation type="submission" date="2005-07" db="EMBL/GenBank/DDBJ databases">
        <authorList>
            <person name="Mural R.J."/>
            <person name="Istrail S."/>
            <person name="Sutton G.G."/>
            <person name="Florea L."/>
            <person name="Halpern A.L."/>
            <person name="Mobarry C.M."/>
            <person name="Lippert R."/>
            <person name="Walenz B."/>
            <person name="Shatkay H."/>
            <person name="Dew I."/>
            <person name="Miller J.R."/>
            <person name="Flanigan M.J."/>
            <person name="Edwards N.J."/>
            <person name="Bolanos R."/>
            <person name="Fasulo D."/>
            <person name="Halldorsson B.V."/>
            <person name="Hannenhalli S."/>
            <person name="Turner R."/>
            <person name="Yooseph S."/>
            <person name="Lu F."/>
            <person name="Nusskern D.R."/>
            <person name="Shue B.C."/>
            <person name="Zheng X.H."/>
            <person name="Zhong F."/>
            <person name="Delcher A.L."/>
            <person name="Huson D.H."/>
            <person name="Kravitz S.A."/>
            <person name="Mouchard L."/>
            <person name="Reinert K."/>
            <person name="Remington K.A."/>
            <person name="Clark A.G."/>
            <person name="Waterman M.S."/>
            <person name="Eichler E.E."/>
            <person name="Adams M.D."/>
            <person name="Hunkapiller M.W."/>
            <person name="Myers E.W."/>
            <person name="Venter J.C."/>
        </authorList>
    </citation>
    <scope>NUCLEOTIDE SEQUENCE [LARGE SCALE GENOMIC DNA]</scope>
</reference>
<reference key="8">
    <citation type="journal article" date="2004" name="Genome Res.">
        <title>The status, quality, and expansion of the NIH full-length cDNA project: the Mammalian Gene Collection (MGC).</title>
        <authorList>
            <consortium name="The MGC Project Team"/>
        </authorList>
    </citation>
    <scope>NUCLEOTIDE SEQUENCE [LARGE SCALE MRNA] (ISOFORM 1)</scope>
    <source>
        <tissue>Testis</tissue>
    </source>
</reference>
<reference key="9">
    <citation type="journal article" date="1998" name="Blood">
        <title>The t(8;13) atypical myeloproliferative disorder: further analysis of the ZNF198 gene and lack of evidence for multiple genes disrupted on chromosome 13.</title>
        <authorList>
            <person name="Still I.H."/>
            <person name="Cowell J.K."/>
        </authorList>
    </citation>
    <scope>NUCLEOTIDE SEQUENCE [MRNA] OF 152-1377 (ISOFORM 1)</scope>
</reference>
<reference key="10">
    <citation type="journal article" date="1998" name="Hum. Mol. Genet.">
        <title>The t(8;13)(p11;q11-12) rearrangement associated with an atypical myeloproliferative disorder fuses the fibroblast growth factor receptor 1 gene to a novel gene RAMP.</title>
        <authorList>
            <person name="Smedley D."/>
            <person name="Hamoudi R."/>
            <person name="Clark J."/>
            <person name="Warren W."/>
            <person name="Abdul-Rauf M."/>
            <person name="Somers G."/>
            <person name="Venter D."/>
            <person name="Fagan K."/>
            <person name="Cooper C."/>
            <person name="Shipley J."/>
        </authorList>
    </citation>
    <scope>NUCLEOTIDE SEQUENCE [MRNA] OF 170-1020 (ISOFORM 1)</scope>
</reference>
<reference key="11">
    <citation type="journal article" date="1998" name="Nat. Genet.">
        <title>FGFR1 is fused with a novel zinc-finger gene, ZNF198, in the t(8;13) leukaemia/lymphoma syndrome.</title>
        <authorList>
            <person name="Xiao S."/>
            <person name="Nalabolu S.R."/>
            <person name="Aster J.C."/>
            <person name="Ma J."/>
            <person name="Abruzzo L."/>
            <person name="Jaffe E.S."/>
            <person name="Stone R."/>
            <person name="Weissman S.M."/>
            <person name="Hudson T.J."/>
            <person name="Fletcher J.A."/>
        </authorList>
    </citation>
    <scope>NUCLEOTIDE SEQUENCE [MRNA] OF 621-1377 (ISOFORM 1)</scope>
</reference>
<reference key="12">
    <citation type="journal article" date="2003" name="J. Biol. Chem.">
        <title>A candidate X-linked mental retardation gene is a component of a new family of histone deacetylase-containing complexes.</title>
        <authorList>
            <person name="Hakimi M.-A."/>
            <person name="Dong Y."/>
            <person name="Lane W.S."/>
            <person name="Speicher D.W."/>
            <person name="Shiekhattar R."/>
        </authorList>
    </citation>
    <scope>IDENTIFICATION IN THE BHC COMPLEX WITH GSE1; GTF2I; HDAC1; HDAC2; HMG20B; KDM1A; RCOR1; PHF21A; ZNF217 AND ZMYM3</scope>
</reference>
<reference key="13">
    <citation type="journal article" date="2008" name="Proc. Natl. Acad. Sci. U.S.A.">
        <title>A quantitative atlas of mitotic phosphorylation.</title>
        <authorList>
            <person name="Dephoure N."/>
            <person name="Zhou C."/>
            <person name="Villen J."/>
            <person name="Beausoleil S.A."/>
            <person name="Bakalarski C.E."/>
            <person name="Elledge S.J."/>
            <person name="Gygi S.P."/>
        </authorList>
    </citation>
    <scope>PHOSPHORYLATION [LARGE SCALE ANALYSIS] AT SER-838 AND THR-1376</scope>
    <scope>IDENTIFICATION BY MASS SPECTROMETRY [LARGE SCALE ANALYSIS]</scope>
    <source>
        <tissue>Cervix carcinoma</tissue>
    </source>
</reference>
<reference key="14">
    <citation type="journal article" date="2009" name="Anal. Chem.">
        <title>Lys-N and trypsin cover complementary parts of the phosphoproteome in a refined SCX-based approach.</title>
        <authorList>
            <person name="Gauci S."/>
            <person name="Helbig A.O."/>
            <person name="Slijper M."/>
            <person name="Krijgsveld J."/>
            <person name="Heck A.J."/>
            <person name="Mohammed S."/>
        </authorList>
    </citation>
    <scope>IDENTIFICATION BY MASS SPECTROMETRY [LARGE SCALE ANALYSIS]</scope>
</reference>
<reference key="15">
    <citation type="journal article" date="2009" name="Sci. Signal.">
        <title>Quantitative phosphoproteomic analysis of T cell receptor signaling reveals system-wide modulation of protein-protein interactions.</title>
        <authorList>
            <person name="Mayya V."/>
            <person name="Lundgren D.H."/>
            <person name="Hwang S.-I."/>
            <person name="Rezaul K."/>
            <person name="Wu L."/>
            <person name="Eng J.K."/>
            <person name="Rodionov V."/>
            <person name="Han D.K."/>
        </authorList>
    </citation>
    <scope>PHOSPHORYLATION [LARGE SCALE ANALYSIS] AT SER-305 AND THR-1376</scope>
    <scope>IDENTIFICATION BY MASS SPECTROMETRY [LARGE SCALE ANALYSIS]</scope>
    <source>
        <tissue>Leukemic T-cell</tissue>
    </source>
</reference>
<reference key="16">
    <citation type="journal article" date="2010" name="Sci. Signal.">
        <title>Quantitative phosphoproteomics reveals widespread full phosphorylation site occupancy during mitosis.</title>
        <authorList>
            <person name="Olsen J.V."/>
            <person name="Vermeulen M."/>
            <person name="Santamaria A."/>
            <person name="Kumar C."/>
            <person name="Miller M.L."/>
            <person name="Jensen L.J."/>
            <person name="Gnad F."/>
            <person name="Cox J."/>
            <person name="Jensen T.S."/>
            <person name="Nigg E.A."/>
            <person name="Brunak S."/>
            <person name="Mann M."/>
        </authorList>
    </citation>
    <scope>IDENTIFICATION BY MASS SPECTROMETRY [LARGE SCALE ANALYSIS]</scope>
    <source>
        <tissue>Cervix carcinoma</tissue>
    </source>
</reference>
<reference key="17">
    <citation type="journal article" date="2011" name="BMC Syst. Biol.">
        <title>Initial characterization of the human central proteome.</title>
        <authorList>
            <person name="Burkard T.R."/>
            <person name="Planyavsky M."/>
            <person name="Kaupe I."/>
            <person name="Breitwieser F.P."/>
            <person name="Buerckstuemmer T."/>
            <person name="Bennett K.L."/>
            <person name="Superti-Furga G."/>
            <person name="Colinge J."/>
        </authorList>
    </citation>
    <scope>IDENTIFICATION BY MASS SPECTROMETRY [LARGE SCALE ANALYSIS]</scope>
</reference>
<reference key="18">
    <citation type="journal article" date="2011" name="Sci. Signal.">
        <title>System-wide temporal characterization of the proteome and phosphoproteome of human embryonic stem cell differentiation.</title>
        <authorList>
            <person name="Rigbolt K.T."/>
            <person name="Prokhorova T.A."/>
            <person name="Akimov V."/>
            <person name="Henningsen J."/>
            <person name="Johansen P.T."/>
            <person name="Kratchmarova I."/>
            <person name="Kassem M."/>
            <person name="Mann M."/>
            <person name="Olsen J.V."/>
            <person name="Blagoev B."/>
        </authorList>
    </citation>
    <scope>PHOSPHORYLATION [LARGE SCALE ANALYSIS] AT SER-305; SER-838 AND SER-958</scope>
    <scope>IDENTIFICATION BY MASS SPECTROMETRY [LARGE SCALE ANALYSIS]</scope>
</reference>
<reference key="19">
    <citation type="journal article" date="2013" name="J. Proteome Res.">
        <title>Toward a comprehensive characterization of a human cancer cell phosphoproteome.</title>
        <authorList>
            <person name="Zhou H."/>
            <person name="Di Palma S."/>
            <person name="Preisinger C."/>
            <person name="Peng M."/>
            <person name="Polat A.N."/>
            <person name="Heck A.J."/>
            <person name="Mohammed S."/>
        </authorList>
    </citation>
    <scope>PHOSPHORYLATION [LARGE SCALE ANALYSIS] AT SER-159; SER-305 AND SER-838</scope>
    <scope>IDENTIFICATION BY MASS SPECTROMETRY [LARGE SCALE ANALYSIS]</scope>
    <source>
        <tissue>Cervix carcinoma</tissue>
        <tissue>Erythroleukemia</tissue>
    </source>
</reference>
<reference key="20">
    <citation type="journal article" date="2014" name="Nat. Struct. Mol. Biol.">
        <title>Uncovering global SUMOylation signaling networks in a site-specific manner.</title>
        <authorList>
            <person name="Hendriks I.A."/>
            <person name="D'Souza R.C."/>
            <person name="Yang B."/>
            <person name="Verlaan-de Vries M."/>
            <person name="Mann M."/>
            <person name="Vertegaal A.C."/>
        </authorList>
    </citation>
    <scope>SUMOYLATION [LARGE SCALE ANALYSIS] AT LYS-88; LYS-98; LYS-104; LYS-253; LYS-297; LYS-441; LYS-529; LYS-532 AND LYS-649</scope>
    <scope>IDENTIFICATION BY MASS SPECTROMETRY [LARGE SCALE ANALYSIS]</scope>
</reference>
<reference key="21">
    <citation type="journal article" date="2015" name="Cell Rep.">
        <title>SUMO-2 orchestrates chromatin modifiers in response to DNA damage.</title>
        <authorList>
            <person name="Hendriks I.A."/>
            <person name="Treffers L.W."/>
            <person name="Verlaan-de Vries M."/>
            <person name="Olsen J.V."/>
            <person name="Vertegaal A.C."/>
        </authorList>
    </citation>
    <scope>SUMOYLATION [LARGE SCALE ANALYSIS] AT LYS-88; LYS-297; LYS-325; LYS-529 AND LYS-576</scope>
    <scope>IDENTIFICATION BY MASS SPECTROMETRY [LARGE SCALE ANALYSIS]</scope>
</reference>
<reference key="22">
    <citation type="journal article" date="2015" name="Mol. Cell. Proteomics">
        <title>System-wide analysis of SUMOylation dynamics in response to replication stress reveals novel small ubiquitin-like modified target proteins and acceptor lysines relevant for genome stability.</title>
        <authorList>
            <person name="Xiao Z."/>
            <person name="Chang J.G."/>
            <person name="Hendriks I.A."/>
            <person name="Sigurdsson J.O."/>
            <person name="Olsen J.V."/>
            <person name="Vertegaal A.C."/>
        </authorList>
    </citation>
    <scope>SUMOYLATION [LARGE SCALE ANALYSIS] AT LYS-88; LYS-98; LYS-441; LYS-513; LYS-529; LYS-532 AND LYS-700</scope>
    <scope>IDENTIFICATION BY MASS SPECTROMETRY [LARGE SCALE ANALYSIS]</scope>
</reference>
<reference key="23">
    <citation type="journal article" date="2017" name="Nat. Struct. Mol. Biol.">
        <title>Site-specific mapping of the human SUMO proteome reveals co-modification with phosphorylation.</title>
        <authorList>
            <person name="Hendriks I.A."/>
            <person name="Lyon D."/>
            <person name="Young C."/>
            <person name="Jensen L.J."/>
            <person name="Vertegaal A.C."/>
            <person name="Nielsen M.L."/>
        </authorList>
    </citation>
    <scope>SUMOYLATION [LARGE SCALE ANALYSIS] AT LYS-48; LYS-88; LYS-98; LYS-104; LYS-147; LYS-253; LYS-297; LYS-312; LYS-325; LYS-348; LYS-366; LYS-417; LYS-441; LYS-491; LYS-503; LYS-513; LYS-529; LYS-532; LYS-576; LYS-603; LYS-649; LYS-658; LYS-688; LYS-700; LYS-709; LYS-764; LYS-788; LYS-812 AND LYS-829</scope>
    <scope>IDENTIFICATION BY MASS SPECTROMETRY [LARGE SCALE ANALYSIS]</scope>
</reference>
<reference key="24">
    <citation type="journal article" date="2020" name="Am. J. Hum. Genet.">
        <title>Mutations of the transcriptional corepressor ZMYM2 cause syndromic urinary tract malformations.</title>
        <authorList>
            <person name="Connaughton D.M."/>
            <person name="Dai R."/>
            <person name="Owen D.J."/>
            <person name="Marquez J."/>
            <person name="Mann N."/>
            <person name="Graham-Paquin A.L."/>
            <person name="Nakayama M."/>
            <person name="Coyaud E."/>
            <person name="Laurent E.M.N."/>
            <person name="St-Germain J.R."/>
            <person name="Blok L.S."/>
            <person name="Vino A."/>
            <person name="Klaembt V."/>
            <person name="Deutsch K."/>
            <person name="Wu C.W."/>
            <person name="Kolvenbach C.M."/>
            <person name="Kause F."/>
            <person name="Ottlewski I."/>
            <person name="Schneider R."/>
            <person name="Kitzler T.M."/>
            <person name="Majmundar A.J."/>
            <person name="Buerger F."/>
            <person name="Onuchic-Whitford A.C."/>
            <person name="Youying M."/>
            <person name="Kolb A."/>
            <person name="Salmanullah D."/>
            <person name="Chen E."/>
            <person name="van der Ven A.T."/>
            <person name="Rao J."/>
            <person name="Ityel H."/>
            <person name="Seltzsam S."/>
            <person name="Rieke J.M."/>
            <person name="Chen J."/>
            <person name="Vivante A."/>
            <person name="Hwang D.Y."/>
            <person name="Kohl S."/>
            <person name="Dworschak G.C."/>
            <person name="Hermle T."/>
            <person name="Alders M."/>
            <person name="Bartolomaeus T."/>
            <person name="Bauer S.B."/>
            <person name="Baum M.A."/>
            <person name="Brilstra E.H."/>
            <person name="Challman T.D."/>
            <person name="Zyskind J."/>
            <person name="Costin C.E."/>
            <person name="Dipple K.M."/>
            <person name="Duijkers F.A."/>
            <person name="Ferguson M."/>
            <person name="Fitzpatrick D.R."/>
            <person name="Fick R."/>
            <person name="Glass I.A."/>
            <person name="Hulick P.J."/>
            <person name="Kline A.D."/>
            <person name="Krey I."/>
            <person name="Kumar S."/>
            <person name="Lu W."/>
            <person name="Marco E.J."/>
            <person name="Wentzensen I.M."/>
            <person name="Mefford H.C."/>
            <person name="Platzer K."/>
            <person name="Povolotskaya I.S."/>
            <person name="Savatt J.M."/>
            <person name="Shcherbakova N.V."/>
            <person name="Senguttuvan P."/>
            <person name="Squire A.E."/>
            <person name="Stein D.R."/>
            <person name="Thiffault I."/>
            <person name="Voinova V.Y."/>
            <person name="Somers M.J.G."/>
            <person name="Ferguson M.A."/>
            <person name="Traum A.Z."/>
            <person name="Daouk G.H."/>
            <person name="Daga A."/>
            <person name="Rodig N.M."/>
            <person name="Terhal P.A."/>
            <person name="van Binsbergen E."/>
            <person name="Eid L.A."/>
            <person name="Tasic V."/>
            <person name="Rasouly H.M."/>
            <person name="Lim T.Y."/>
            <person name="Ahram D.F."/>
            <person name="Gharavi A.G."/>
            <person name="Reutter H.M."/>
            <person name="Rehm H.L."/>
            <person name="MacArthur D.G."/>
            <person name="Lek M."/>
            <person name="Laricchia K.M."/>
            <person name="Lifton R.P."/>
            <person name="Xu H."/>
            <person name="Mane S.M."/>
            <person name="Sanna-Cherchi S."/>
            <person name="Sharrocks A.D."/>
            <person name="Raught B."/>
            <person name="Fisher S.E."/>
            <person name="Bouchard M."/>
            <person name="Khokha M.K."/>
            <person name="Shril S."/>
            <person name="Hildebrandt F."/>
        </authorList>
    </citation>
    <scope>VARIANTS VAL-61 DEL; ALA-126; VAL-387; ARG-649; HIS-763; LEU-763; GLU-775; ASP-997 DEL AND LYS-1031</scope>
    <scope>CHARACTERIZATION OF VARIANTS VAL-61 DEL; ALA-126; VAL-387; ARG-649; HIS-763; LEU-763; GLU-775; ASP-997 DEL AND LYS-1031</scope>
    <scope>VARIANTS NECRC 208-ARG--ASP-1377 DEL; 398-GLN--ASP-1377 DEL; 540-ARG--ASP-1377 DEL; 722-LEU--ASP-1377 DEL; 780-ARG--ASP-1377 DEL AND 1082-TRP--ASP-1377 DEL</scope>
    <scope>CHARACTERIZATION OF VARIANTS NECRC 398-GLN--ASP-1377 DEL AND 540-ARG--ASP-1377 DEL</scope>
    <scope>FUNCTION</scope>
    <scope>SUBCELLULAR LOCATION</scope>
    <scope>INTERACTION WITH FOXP1 AND FOXP2</scope>
</reference>
<gene>
    <name type="primary">ZMYM2</name>
    <name type="synonym">FIM</name>
    <name type="synonym">RAMP</name>
    <name type="synonym">ZNF198</name>
</gene>
<proteinExistence type="evidence at protein level"/>
<evidence type="ECO:0000250" key="1">
    <source>
        <dbReference type="UniProtKB" id="Q9CU65"/>
    </source>
</evidence>
<evidence type="ECO:0000255" key="2"/>
<evidence type="ECO:0000256" key="3">
    <source>
        <dbReference type="SAM" id="MobiDB-lite"/>
    </source>
</evidence>
<evidence type="ECO:0000269" key="4">
    <source>
    </source>
</evidence>
<evidence type="ECO:0000269" key="5">
    <source>
    </source>
</evidence>
<evidence type="ECO:0000269" key="6">
    <source>
    </source>
</evidence>
<evidence type="ECO:0000303" key="7">
    <source>
    </source>
</evidence>
<evidence type="ECO:0000305" key="8"/>
<evidence type="ECO:0007744" key="9">
    <source>
    </source>
</evidence>
<evidence type="ECO:0007744" key="10">
    <source>
    </source>
</evidence>
<evidence type="ECO:0007744" key="11">
    <source>
    </source>
</evidence>
<evidence type="ECO:0007744" key="12">
    <source>
    </source>
</evidence>
<evidence type="ECO:0007744" key="13">
    <source>
    </source>
</evidence>
<evidence type="ECO:0007744" key="14">
    <source>
    </source>
</evidence>
<evidence type="ECO:0007744" key="15">
    <source>
    </source>
</evidence>
<evidence type="ECO:0007744" key="16">
    <source>
    </source>
</evidence>
<name>ZMYM2_HUMAN</name>